<comment type="function">
    <text evidence="1">Involved in targeting and insertion of nascent membrane proteins into the cytoplasmic membrane. Binds directly to 7S RNA and mediates binding of the 54 kDa subunit of the SRP.</text>
</comment>
<comment type="subunit">
    <text evidence="1">Part of the signal recognition particle protein translocation system, which is composed of SRP and FtsY. Archaeal SRP consists of a 7S RNA molecule of 300 nucleotides and two protein subunits: SRP54 and SRP19.</text>
</comment>
<comment type="subcellular location">
    <subcellularLocation>
        <location evidence="1">Cytoplasm</location>
    </subcellularLocation>
</comment>
<comment type="similarity">
    <text evidence="1">Belongs to the SRP19 family.</text>
</comment>
<comment type="sequence caution" evidence="2">
    <conflict type="erroneous initiation">
        <sequence resource="EMBL-CDS" id="ABE52989"/>
    </conflict>
    <text>Extended N-terminus.</text>
</comment>
<feature type="chain" id="PRO_0000300745" description="Signal recognition particle 19 kDa protein">
    <location>
        <begin position="1"/>
        <end position="95"/>
    </location>
</feature>
<protein>
    <recommendedName>
        <fullName evidence="1">Signal recognition particle 19 kDa protein</fullName>
        <shortName evidence="1">SRP19</shortName>
    </recommendedName>
</protein>
<name>SRP19_METBU</name>
<sequence length="95" mass="10729">MREKGKLVIWPANLDKSRSRKGGRIISRKSSLEAPLLRELTAAAEKLNLNPEVEADKKYPRTWWESSGRILVDNNEAKTMVARKIAKTIKEARGG</sequence>
<dbReference type="EMBL" id="CP000300">
    <property type="protein sequence ID" value="ABE52989.1"/>
    <property type="status" value="ALT_INIT"/>
    <property type="molecule type" value="Genomic_DNA"/>
</dbReference>
<dbReference type="RefSeq" id="WP_048063661.1">
    <property type="nucleotide sequence ID" value="NC_007955.1"/>
</dbReference>
<dbReference type="SMR" id="Q12U87"/>
<dbReference type="STRING" id="259564.Mbur_2116"/>
<dbReference type="GeneID" id="3998199"/>
<dbReference type="KEGG" id="mbu:Mbur_2116"/>
<dbReference type="HOGENOM" id="CLU_169299_1_0_2"/>
<dbReference type="OrthoDB" id="56356at2157"/>
<dbReference type="Proteomes" id="UP000001979">
    <property type="component" value="Chromosome"/>
</dbReference>
<dbReference type="GO" id="GO:0048500">
    <property type="term" value="C:signal recognition particle"/>
    <property type="evidence" value="ECO:0007669"/>
    <property type="project" value="UniProtKB-UniRule"/>
</dbReference>
<dbReference type="GO" id="GO:0008312">
    <property type="term" value="F:7S RNA binding"/>
    <property type="evidence" value="ECO:0007669"/>
    <property type="project" value="UniProtKB-UniRule"/>
</dbReference>
<dbReference type="GO" id="GO:0006617">
    <property type="term" value="P:SRP-dependent cotranslational protein targeting to membrane, signal sequence recognition"/>
    <property type="evidence" value="ECO:0007669"/>
    <property type="project" value="TreeGrafter"/>
</dbReference>
<dbReference type="Gene3D" id="3.30.56.30">
    <property type="entry name" value="Signal recognition particle, SRP19-like subunit"/>
    <property type="match status" value="1"/>
</dbReference>
<dbReference type="HAMAP" id="MF_00305">
    <property type="entry name" value="SRP19"/>
    <property type="match status" value="1"/>
</dbReference>
<dbReference type="InterPro" id="IPR002778">
    <property type="entry name" value="Signal_recog_particle_SRP19"/>
</dbReference>
<dbReference type="InterPro" id="IPR036521">
    <property type="entry name" value="SRP19-like_sf"/>
</dbReference>
<dbReference type="InterPro" id="IPR022938">
    <property type="entry name" value="SRP19_arc-type"/>
</dbReference>
<dbReference type="NCBIfam" id="NF001973">
    <property type="entry name" value="PRK00754.1"/>
    <property type="match status" value="1"/>
</dbReference>
<dbReference type="PANTHER" id="PTHR17453">
    <property type="entry name" value="SIGNAL RECOGNITION PARTICLE 19 KD PROTEIN"/>
    <property type="match status" value="1"/>
</dbReference>
<dbReference type="PANTHER" id="PTHR17453:SF0">
    <property type="entry name" value="SIGNAL RECOGNITION PARTICLE 19 KDA PROTEIN"/>
    <property type="match status" value="1"/>
</dbReference>
<dbReference type="Pfam" id="PF01922">
    <property type="entry name" value="SRP19"/>
    <property type="match status" value="1"/>
</dbReference>
<dbReference type="SUPFAM" id="SSF69695">
    <property type="entry name" value="SRP19"/>
    <property type="match status" value="1"/>
</dbReference>
<organism>
    <name type="scientific">Methanococcoides burtonii (strain DSM 6242 / NBRC 107633 / OCM 468 / ACE-M)</name>
    <dbReference type="NCBI Taxonomy" id="259564"/>
    <lineage>
        <taxon>Archaea</taxon>
        <taxon>Methanobacteriati</taxon>
        <taxon>Methanobacteriota</taxon>
        <taxon>Stenosarchaea group</taxon>
        <taxon>Methanomicrobia</taxon>
        <taxon>Methanosarcinales</taxon>
        <taxon>Methanosarcinaceae</taxon>
        <taxon>Methanococcoides</taxon>
    </lineage>
</organism>
<proteinExistence type="inferred from homology"/>
<gene>
    <name evidence="1" type="primary">srp19</name>
    <name type="ordered locus">Mbur_2116</name>
</gene>
<accession>Q12U87</accession>
<evidence type="ECO:0000255" key="1">
    <source>
        <dbReference type="HAMAP-Rule" id="MF_00305"/>
    </source>
</evidence>
<evidence type="ECO:0000305" key="2"/>
<reference key="1">
    <citation type="journal article" date="2009" name="ISME J.">
        <title>The genome sequence of the psychrophilic archaeon, Methanococcoides burtonii: the role of genome evolution in cold adaptation.</title>
        <authorList>
            <person name="Allen M.A."/>
            <person name="Lauro F.M."/>
            <person name="Williams T.J."/>
            <person name="Burg D."/>
            <person name="Siddiqui K.S."/>
            <person name="De Francisci D."/>
            <person name="Chong K.W."/>
            <person name="Pilak O."/>
            <person name="Chew H.H."/>
            <person name="De Maere M.Z."/>
            <person name="Ting L."/>
            <person name="Katrib M."/>
            <person name="Ng C."/>
            <person name="Sowers K.R."/>
            <person name="Galperin M.Y."/>
            <person name="Anderson I.J."/>
            <person name="Ivanova N."/>
            <person name="Dalin E."/>
            <person name="Martinez M."/>
            <person name="Lapidus A."/>
            <person name="Hauser L."/>
            <person name="Land M."/>
            <person name="Thomas T."/>
            <person name="Cavicchioli R."/>
        </authorList>
    </citation>
    <scope>NUCLEOTIDE SEQUENCE [LARGE SCALE GENOMIC DNA]</scope>
    <source>
        <strain>DSM 6242 / NBRC 107633 / OCM 468 / ACE-M</strain>
    </source>
</reference>
<keyword id="KW-0963">Cytoplasm</keyword>
<keyword id="KW-0687">Ribonucleoprotein</keyword>
<keyword id="KW-0694">RNA-binding</keyword>
<keyword id="KW-0733">Signal recognition particle</keyword>